<keyword id="KW-0963">Cytoplasm</keyword>
<keyword id="KW-0324">Glycolysis</keyword>
<keyword id="KW-0456">Lyase</keyword>
<keyword id="KW-0460">Magnesium</keyword>
<keyword id="KW-0479">Metal-binding</keyword>
<keyword id="KW-0964">Secreted</keyword>
<gene>
    <name evidence="1" type="primary">eno</name>
    <name type="ordered locus">mma_1270</name>
</gene>
<reference key="1">
    <citation type="journal article" date="2007" name="PLoS Genet.">
        <title>Genome analysis of Minibacterium massiliensis highlights the convergent evolution of water-living bacteria.</title>
        <authorList>
            <person name="Audic S."/>
            <person name="Robert C."/>
            <person name="Campagna B."/>
            <person name="Parinello H."/>
            <person name="Claverie J.-M."/>
            <person name="Raoult D."/>
            <person name="Drancourt M."/>
        </authorList>
    </citation>
    <scope>NUCLEOTIDE SEQUENCE [LARGE SCALE GENOMIC DNA]</scope>
    <source>
        <strain>Marseille</strain>
    </source>
</reference>
<comment type="function">
    <text evidence="1">Catalyzes the reversible conversion of 2-phosphoglycerate (2-PG) into phosphoenolpyruvate (PEP). It is essential for the degradation of carbohydrates via glycolysis.</text>
</comment>
<comment type="catalytic activity">
    <reaction evidence="1">
        <text>(2R)-2-phosphoglycerate = phosphoenolpyruvate + H2O</text>
        <dbReference type="Rhea" id="RHEA:10164"/>
        <dbReference type="ChEBI" id="CHEBI:15377"/>
        <dbReference type="ChEBI" id="CHEBI:58289"/>
        <dbReference type="ChEBI" id="CHEBI:58702"/>
        <dbReference type="EC" id="4.2.1.11"/>
    </reaction>
</comment>
<comment type="cofactor">
    <cofactor evidence="1">
        <name>Mg(2+)</name>
        <dbReference type="ChEBI" id="CHEBI:18420"/>
    </cofactor>
    <text evidence="1">Binds a second Mg(2+) ion via substrate during catalysis.</text>
</comment>
<comment type="pathway">
    <text evidence="1">Carbohydrate degradation; glycolysis; pyruvate from D-glyceraldehyde 3-phosphate: step 4/5.</text>
</comment>
<comment type="subcellular location">
    <subcellularLocation>
        <location evidence="1">Cytoplasm</location>
    </subcellularLocation>
    <subcellularLocation>
        <location evidence="1">Secreted</location>
    </subcellularLocation>
    <subcellularLocation>
        <location evidence="1">Cell surface</location>
    </subcellularLocation>
    <text evidence="1">Fractions of enolase are present in both the cytoplasm and on the cell surface.</text>
</comment>
<comment type="similarity">
    <text evidence="1">Belongs to the enolase family.</text>
</comment>
<organism>
    <name type="scientific">Janthinobacterium sp. (strain Marseille)</name>
    <name type="common">Minibacterium massiliensis</name>
    <dbReference type="NCBI Taxonomy" id="375286"/>
    <lineage>
        <taxon>Bacteria</taxon>
        <taxon>Pseudomonadati</taxon>
        <taxon>Pseudomonadota</taxon>
        <taxon>Betaproteobacteria</taxon>
        <taxon>Burkholderiales</taxon>
        <taxon>Oxalobacteraceae</taxon>
        <taxon>Janthinobacterium</taxon>
    </lineage>
</organism>
<evidence type="ECO:0000255" key="1">
    <source>
        <dbReference type="HAMAP-Rule" id="MF_00318"/>
    </source>
</evidence>
<sequence>MSAIVDIIGREVIDSRGNPTVECDVLLESGVMGRAAVPSGASTGSREAIELRDGDKSRYFGKGVLKACEHINTEISEAIMGLDANEQAFLDRTLIDLDGTENKARLGANATLAVSMAVAKAAAEESGLPLYRYFGGSGAMQMPVPMMNVINGGAHANNNLDLQEFMIIPVGAPSFREAIRYGAEVFHTLKKIINDKGLPTSVGDEGGFAPSVENHEAAIKLILQAIEQAGYEPGTQIALGLDCAASEFYKDGKYHLAGEGMTLSSADFTNLLGTWCDKYPIISIEDGMAENDWDGWATLTNALGKKVQLVGDDLFVTNTKILREGIQKNIANSILIKINQIGTLTETFAAIEMAKRAGYTAVISHRSGETEDSTIADIAVGTNSLQIKTGSMSRSDRMAKYNQLLRIEEDLGDIASYPGRGAFYNLK</sequence>
<protein>
    <recommendedName>
        <fullName evidence="1">Enolase</fullName>
        <ecNumber evidence="1">4.2.1.11</ecNumber>
    </recommendedName>
    <alternativeName>
        <fullName evidence="1">2-phospho-D-glycerate hydro-lyase</fullName>
    </alternativeName>
    <alternativeName>
        <fullName evidence="1">2-phosphoglycerate dehydratase</fullName>
    </alternativeName>
</protein>
<dbReference type="EC" id="4.2.1.11" evidence="1"/>
<dbReference type="EMBL" id="CP000269">
    <property type="protein sequence ID" value="ABR88421.1"/>
    <property type="molecule type" value="Genomic_DNA"/>
</dbReference>
<dbReference type="RefSeq" id="WP_012079127.1">
    <property type="nucleotide sequence ID" value="NC_009659.1"/>
</dbReference>
<dbReference type="SMR" id="A6SXG3"/>
<dbReference type="STRING" id="375286.mma_1270"/>
<dbReference type="KEGG" id="mms:mma_1270"/>
<dbReference type="eggNOG" id="COG0148">
    <property type="taxonomic scope" value="Bacteria"/>
</dbReference>
<dbReference type="HOGENOM" id="CLU_031223_2_1_4"/>
<dbReference type="OrthoDB" id="9804716at2"/>
<dbReference type="UniPathway" id="UPA00109">
    <property type="reaction ID" value="UER00187"/>
</dbReference>
<dbReference type="Proteomes" id="UP000006388">
    <property type="component" value="Chromosome"/>
</dbReference>
<dbReference type="GO" id="GO:0009986">
    <property type="term" value="C:cell surface"/>
    <property type="evidence" value="ECO:0007669"/>
    <property type="project" value="UniProtKB-SubCell"/>
</dbReference>
<dbReference type="GO" id="GO:0005576">
    <property type="term" value="C:extracellular region"/>
    <property type="evidence" value="ECO:0007669"/>
    <property type="project" value="UniProtKB-SubCell"/>
</dbReference>
<dbReference type="GO" id="GO:0000015">
    <property type="term" value="C:phosphopyruvate hydratase complex"/>
    <property type="evidence" value="ECO:0007669"/>
    <property type="project" value="InterPro"/>
</dbReference>
<dbReference type="GO" id="GO:0000287">
    <property type="term" value="F:magnesium ion binding"/>
    <property type="evidence" value="ECO:0007669"/>
    <property type="project" value="UniProtKB-UniRule"/>
</dbReference>
<dbReference type="GO" id="GO:0004634">
    <property type="term" value="F:phosphopyruvate hydratase activity"/>
    <property type="evidence" value="ECO:0007669"/>
    <property type="project" value="UniProtKB-UniRule"/>
</dbReference>
<dbReference type="GO" id="GO:0006096">
    <property type="term" value="P:glycolytic process"/>
    <property type="evidence" value="ECO:0007669"/>
    <property type="project" value="UniProtKB-UniRule"/>
</dbReference>
<dbReference type="CDD" id="cd03313">
    <property type="entry name" value="enolase"/>
    <property type="match status" value="1"/>
</dbReference>
<dbReference type="FunFam" id="3.20.20.120:FF:000001">
    <property type="entry name" value="Enolase"/>
    <property type="match status" value="1"/>
</dbReference>
<dbReference type="FunFam" id="3.30.390.10:FF:000001">
    <property type="entry name" value="Enolase"/>
    <property type="match status" value="1"/>
</dbReference>
<dbReference type="Gene3D" id="3.20.20.120">
    <property type="entry name" value="Enolase-like C-terminal domain"/>
    <property type="match status" value="1"/>
</dbReference>
<dbReference type="Gene3D" id="3.30.390.10">
    <property type="entry name" value="Enolase-like, N-terminal domain"/>
    <property type="match status" value="1"/>
</dbReference>
<dbReference type="HAMAP" id="MF_00318">
    <property type="entry name" value="Enolase"/>
    <property type="match status" value="1"/>
</dbReference>
<dbReference type="InterPro" id="IPR000941">
    <property type="entry name" value="Enolase"/>
</dbReference>
<dbReference type="InterPro" id="IPR036849">
    <property type="entry name" value="Enolase-like_C_sf"/>
</dbReference>
<dbReference type="InterPro" id="IPR029017">
    <property type="entry name" value="Enolase-like_N"/>
</dbReference>
<dbReference type="InterPro" id="IPR020810">
    <property type="entry name" value="Enolase_C"/>
</dbReference>
<dbReference type="InterPro" id="IPR020809">
    <property type="entry name" value="Enolase_CS"/>
</dbReference>
<dbReference type="InterPro" id="IPR020811">
    <property type="entry name" value="Enolase_N"/>
</dbReference>
<dbReference type="NCBIfam" id="TIGR01060">
    <property type="entry name" value="eno"/>
    <property type="match status" value="1"/>
</dbReference>
<dbReference type="PANTHER" id="PTHR11902">
    <property type="entry name" value="ENOLASE"/>
    <property type="match status" value="1"/>
</dbReference>
<dbReference type="PANTHER" id="PTHR11902:SF1">
    <property type="entry name" value="ENOLASE"/>
    <property type="match status" value="1"/>
</dbReference>
<dbReference type="Pfam" id="PF00113">
    <property type="entry name" value="Enolase_C"/>
    <property type="match status" value="1"/>
</dbReference>
<dbReference type="Pfam" id="PF03952">
    <property type="entry name" value="Enolase_N"/>
    <property type="match status" value="1"/>
</dbReference>
<dbReference type="PIRSF" id="PIRSF001400">
    <property type="entry name" value="Enolase"/>
    <property type="match status" value="1"/>
</dbReference>
<dbReference type="PRINTS" id="PR00148">
    <property type="entry name" value="ENOLASE"/>
</dbReference>
<dbReference type="SFLD" id="SFLDS00001">
    <property type="entry name" value="Enolase"/>
    <property type="match status" value="1"/>
</dbReference>
<dbReference type="SFLD" id="SFLDF00002">
    <property type="entry name" value="enolase"/>
    <property type="match status" value="1"/>
</dbReference>
<dbReference type="SMART" id="SM01192">
    <property type="entry name" value="Enolase_C"/>
    <property type="match status" value="1"/>
</dbReference>
<dbReference type="SMART" id="SM01193">
    <property type="entry name" value="Enolase_N"/>
    <property type="match status" value="1"/>
</dbReference>
<dbReference type="SUPFAM" id="SSF51604">
    <property type="entry name" value="Enolase C-terminal domain-like"/>
    <property type="match status" value="1"/>
</dbReference>
<dbReference type="SUPFAM" id="SSF54826">
    <property type="entry name" value="Enolase N-terminal domain-like"/>
    <property type="match status" value="1"/>
</dbReference>
<dbReference type="PROSITE" id="PS00164">
    <property type="entry name" value="ENOLASE"/>
    <property type="match status" value="1"/>
</dbReference>
<name>ENO_JANMA</name>
<feature type="chain" id="PRO_1000019214" description="Enolase">
    <location>
        <begin position="1"/>
        <end position="427"/>
    </location>
</feature>
<feature type="active site" description="Proton donor" evidence="1">
    <location>
        <position position="205"/>
    </location>
</feature>
<feature type="active site" description="Proton acceptor" evidence="1">
    <location>
        <position position="337"/>
    </location>
</feature>
<feature type="binding site" evidence="1">
    <location>
        <position position="163"/>
    </location>
    <ligand>
        <name>(2R)-2-phosphoglycerate</name>
        <dbReference type="ChEBI" id="CHEBI:58289"/>
    </ligand>
</feature>
<feature type="binding site" evidence="1">
    <location>
        <position position="242"/>
    </location>
    <ligand>
        <name>Mg(2+)</name>
        <dbReference type="ChEBI" id="CHEBI:18420"/>
    </ligand>
</feature>
<feature type="binding site" evidence="1">
    <location>
        <position position="285"/>
    </location>
    <ligand>
        <name>Mg(2+)</name>
        <dbReference type="ChEBI" id="CHEBI:18420"/>
    </ligand>
</feature>
<feature type="binding site" evidence="1">
    <location>
        <position position="312"/>
    </location>
    <ligand>
        <name>Mg(2+)</name>
        <dbReference type="ChEBI" id="CHEBI:18420"/>
    </ligand>
</feature>
<feature type="binding site" evidence="1">
    <location>
        <position position="337"/>
    </location>
    <ligand>
        <name>(2R)-2-phosphoglycerate</name>
        <dbReference type="ChEBI" id="CHEBI:58289"/>
    </ligand>
</feature>
<feature type="binding site" evidence="1">
    <location>
        <position position="366"/>
    </location>
    <ligand>
        <name>(2R)-2-phosphoglycerate</name>
        <dbReference type="ChEBI" id="CHEBI:58289"/>
    </ligand>
</feature>
<feature type="binding site" evidence="1">
    <location>
        <position position="367"/>
    </location>
    <ligand>
        <name>(2R)-2-phosphoglycerate</name>
        <dbReference type="ChEBI" id="CHEBI:58289"/>
    </ligand>
</feature>
<feature type="binding site" evidence="1">
    <location>
        <position position="388"/>
    </location>
    <ligand>
        <name>(2R)-2-phosphoglycerate</name>
        <dbReference type="ChEBI" id="CHEBI:58289"/>
    </ligand>
</feature>
<proteinExistence type="inferred from homology"/>
<accession>A6SXG3</accession>